<protein>
    <recommendedName>
        <fullName evidence="1">Transcription termination factor Rho</fullName>
        <ecNumber evidence="1">3.6.4.-</ecNumber>
    </recommendedName>
    <alternativeName>
        <fullName evidence="1">ATP-dependent helicase Rho</fullName>
    </alternativeName>
</protein>
<reference key="1">
    <citation type="journal article" date="2011" name="PLoS ONE">
        <title>The genome of Akkermansia muciniphila, a dedicated intestinal mucin degrader, and its use in exploring intestinal metagenomes.</title>
        <authorList>
            <person name="van Passel M.W."/>
            <person name="Kant R."/>
            <person name="Zoetendal E.G."/>
            <person name="Plugge C.M."/>
            <person name="Derrien M."/>
            <person name="Malfatti S.A."/>
            <person name="Chain P.S."/>
            <person name="Woyke T."/>
            <person name="Palva A."/>
            <person name="de Vos W.M."/>
            <person name="Smidt H."/>
        </authorList>
    </citation>
    <scope>NUCLEOTIDE SEQUENCE [LARGE SCALE GENOMIC DNA]</scope>
    <source>
        <strain>ATCC BAA-835 / DSM 22959 / JCM 33894 / BCRC 81048 / CCUG 64013 / CIP 107961 / Muc</strain>
    </source>
</reference>
<name>RHO_AKKM8</name>
<dbReference type="EC" id="3.6.4.-" evidence="1"/>
<dbReference type="EMBL" id="CP001071">
    <property type="protein sequence ID" value="ACD04922.1"/>
    <property type="molecule type" value="Genomic_DNA"/>
</dbReference>
<dbReference type="RefSeq" id="WP_012420137.1">
    <property type="nucleotide sequence ID" value="NC_010655.1"/>
</dbReference>
<dbReference type="SMR" id="B2UR37"/>
<dbReference type="STRING" id="349741.Amuc_1096"/>
<dbReference type="PaxDb" id="349741-Amuc_1096"/>
<dbReference type="KEGG" id="amu:Amuc_1096"/>
<dbReference type="eggNOG" id="COG1158">
    <property type="taxonomic scope" value="Bacteria"/>
</dbReference>
<dbReference type="HOGENOM" id="CLU_016377_4_3_0"/>
<dbReference type="OrthoDB" id="9805197at2"/>
<dbReference type="BioCyc" id="AMUC349741:G1GBX-1172-MONOMER"/>
<dbReference type="Proteomes" id="UP000001031">
    <property type="component" value="Chromosome"/>
</dbReference>
<dbReference type="GO" id="GO:0005524">
    <property type="term" value="F:ATP binding"/>
    <property type="evidence" value="ECO:0007669"/>
    <property type="project" value="UniProtKB-UniRule"/>
</dbReference>
<dbReference type="GO" id="GO:0016887">
    <property type="term" value="F:ATP hydrolysis activity"/>
    <property type="evidence" value="ECO:0007669"/>
    <property type="project" value="InterPro"/>
</dbReference>
<dbReference type="GO" id="GO:0008186">
    <property type="term" value="F:ATP-dependent activity, acting on RNA"/>
    <property type="evidence" value="ECO:0007669"/>
    <property type="project" value="InterPro"/>
</dbReference>
<dbReference type="GO" id="GO:0004386">
    <property type="term" value="F:helicase activity"/>
    <property type="evidence" value="ECO:0007669"/>
    <property type="project" value="UniProtKB-UniRule"/>
</dbReference>
<dbReference type="GO" id="GO:0003723">
    <property type="term" value="F:RNA binding"/>
    <property type="evidence" value="ECO:0007669"/>
    <property type="project" value="UniProtKB-UniRule"/>
</dbReference>
<dbReference type="GO" id="GO:0006353">
    <property type="term" value="P:DNA-templated transcription termination"/>
    <property type="evidence" value="ECO:0007669"/>
    <property type="project" value="UniProtKB-UniRule"/>
</dbReference>
<dbReference type="CDD" id="cd01128">
    <property type="entry name" value="rho_factor_C"/>
    <property type="match status" value="1"/>
</dbReference>
<dbReference type="Gene3D" id="2.40.50.140">
    <property type="entry name" value="Nucleic acid-binding proteins"/>
    <property type="match status" value="1"/>
</dbReference>
<dbReference type="Gene3D" id="3.40.50.300">
    <property type="entry name" value="P-loop containing nucleotide triphosphate hydrolases"/>
    <property type="match status" value="1"/>
</dbReference>
<dbReference type="HAMAP" id="MF_01884">
    <property type="entry name" value="Rho"/>
    <property type="match status" value="1"/>
</dbReference>
<dbReference type="InterPro" id="IPR003593">
    <property type="entry name" value="AAA+_ATPase"/>
</dbReference>
<dbReference type="InterPro" id="IPR000194">
    <property type="entry name" value="ATPase_F1/V1/A1_a/bsu_nucl-bd"/>
</dbReference>
<dbReference type="InterPro" id="IPR012340">
    <property type="entry name" value="NA-bd_OB-fold"/>
</dbReference>
<dbReference type="InterPro" id="IPR027417">
    <property type="entry name" value="P-loop_NTPase"/>
</dbReference>
<dbReference type="InterPro" id="IPR011112">
    <property type="entry name" value="Rho-like_N"/>
</dbReference>
<dbReference type="InterPro" id="IPR041703">
    <property type="entry name" value="Rho_factor_ATP-bd"/>
</dbReference>
<dbReference type="InterPro" id="IPR036269">
    <property type="entry name" value="Rho_N_sf"/>
</dbReference>
<dbReference type="InterPro" id="IPR011113">
    <property type="entry name" value="Rho_RNA-bd"/>
</dbReference>
<dbReference type="InterPro" id="IPR004665">
    <property type="entry name" value="Term_rho"/>
</dbReference>
<dbReference type="NCBIfam" id="NF006886">
    <property type="entry name" value="PRK09376.1"/>
    <property type="match status" value="1"/>
</dbReference>
<dbReference type="PANTHER" id="PTHR46425">
    <property type="entry name" value="TRANSCRIPTION TERMINATION FACTOR RHO"/>
    <property type="match status" value="1"/>
</dbReference>
<dbReference type="PANTHER" id="PTHR46425:SF1">
    <property type="entry name" value="TRANSCRIPTION TERMINATION FACTOR RHO"/>
    <property type="match status" value="1"/>
</dbReference>
<dbReference type="Pfam" id="PF00006">
    <property type="entry name" value="ATP-synt_ab"/>
    <property type="match status" value="1"/>
</dbReference>
<dbReference type="Pfam" id="PF07498">
    <property type="entry name" value="Rho_N"/>
    <property type="match status" value="1"/>
</dbReference>
<dbReference type="Pfam" id="PF07497">
    <property type="entry name" value="Rho_RNA_bind"/>
    <property type="match status" value="1"/>
</dbReference>
<dbReference type="SMART" id="SM00382">
    <property type="entry name" value="AAA"/>
    <property type="match status" value="1"/>
</dbReference>
<dbReference type="SMART" id="SM00959">
    <property type="entry name" value="Rho_N"/>
    <property type="match status" value="1"/>
</dbReference>
<dbReference type="SUPFAM" id="SSF50249">
    <property type="entry name" value="Nucleic acid-binding proteins"/>
    <property type="match status" value="1"/>
</dbReference>
<dbReference type="SUPFAM" id="SSF52540">
    <property type="entry name" value="P-loop containing nucleoside triphosphate hydrolases"/>
    <property type="match status" value="1"/>
</dbReference>
<dbReference type="SUPFAM" id="SSF68912">
    <property type="entry name" value="Rho N-terminal domain-like"/>
    <property type="match status" value="1"/>
</dbReference>
<dbReference type="PROSITE" id="PS51856">
    <property type="entry name" value="RHO_RNA_BD"/>
    <property type="match status" value="1"/>
</dbReference>
<accession>B2UR37</accession>
<sequence>MTEELDNTPSPAGDIPQETLPKPLPAPEETAGEQPAAAPEENRGNAVREEEEAAPVLEQIDINELRKRPLNDLQEMAEGLPIRNAASLTKSQLVFELGKQLLAKGHEVVVSGVMEQAKDNYAMLRDPVKSFRTSPDDIYLGGNLIKPLHLRVGQQIKVRLRKLRPHDKYLSAASVISVEDIPAEDYRARSDFERLTPLFPKERLLLENKGVNSAAMRVLDLMTPFGKGQRGLIVAPPRGGKTVLLKTIARSIRANYPEVELIVLLLDERPEEVTDFEETVDAPVFASTFDEPSRRHAQVSDLVIERAKRLVEMGRDVVILLDSLTRLARGYNANQTGGRIMSGGLGSNALEKPRKFFSAARNVEEGGSLTIIATCLVDTESRMDEVIFEEFKGTGNLEIRLDRELSERRIYPAISLSQSGTRNDDRLYNEQEFVKIMQLRRQLAMKPGWEGLQTLLQNISKTQNNAELLLTGLR</sequence>
<proteinExistence type="inferred from homology"/>
<comment type="function">
    <text evidence="1">Facilitates transcription termination by a mechanism that involves Rho binding to the nascent RNA, activation of Rho's RNA-dependent ATPase activity, and release of the mRNA from the DNA template.</text>
</comment>
<comment type="subunit">
    <text evidence="1">Homohexamer. The homohexamer assembles into an open ring structure.</text>
</comment>
<comment type="similarity">
    <text evidence="1">Belongs to the Rho family.</text>
</comment>
<feature type="chain" id="PRO_0000398664" description="Transcription termination factor Rho">
    <location>
        <begin position="1"/>
        <end position="474"/>
    </location>
</feature>
<feature type="domain" description="Rho RNA-BD" evidence="2">
    <location>
        <begin position="107"/>
        <end position="182"/>
    </location>
</feature>
<feature type="region of interest" description="Disordered" evidence="3">
    <location>
        <begin position="1"/>
        <end position="60"/>
    </location>
</feature>
<feature type="binding site" evidence="1">
    <location>
        <begin position="226"/>
        <end position="231"/>
    </location>
    <ligand>
        <name>ATP</name>
        <dbReference type="ChEBI" id="CHEBI:30616"/>
    </ligand>
</feature>
<feature type="binding site" evidence="1">
    <location>
        <begin position="238"/>
        <end position="243"/>
    </location>
    <ligand>
        <name>ATP</name>
        <dbReference type="ChEBI" id="CHEBI:30616"/>
    </ligand>
</feature>
<feature type="binding site" evidence="1">
    <location>
        <position position="269"/>
    </location>
    <ligand>
        <name>ATP</name>
        <dbReference type="ChEBI" id="CHEBI:30616"/>
    </ligand>
</feature>
<gene>
    <name evidence="1" type="primary">rho</name>
    <name type="ordered locus">Amuc_1096</name>
</gene>
<keyword id="KW-0067">ATP-binding</keyword>
<keyword id="KW-0347">Helicase</keyword>
<keyword id="KW-0378">Hydrolase</keyword>
<keyword id="KW-0547">Nucleotide-binding</keyword>
<keyword id="KW-1185">Reference proteome</keyword>
<keyword id="KW-0694">RNA-binding</keyword>
<keyword id="KW-0804">Transcription</keyword>
<keyword id="KW-0805">Transcription regulation</keyword>
<keyword id="KW-0806">Transcription termination</keyword>
<evidence type="ECO:0000255" key="1">
    <source>
        <dbReference type="HAMAP-Rule" id="MF_01884"/>
    </source>
</evidence>
<evidence type="ECO:0000255" key="2">
    <source>
        <dbReference type="PROSITE-ProRule" id="PRU01203"/>
    </source>
</evidence>
<evidence type="ECO:0000256" key="3">
    <source>
        <dbReference type="SAM" id="MobiDB-lite"/>
    </source>
</evidence>
<organism>
    <name type="scientific">Akkermansia muciniphila (strain ATCC BAA-835 / DSM 22959 / JCM 33894 / BCRC 81048 / CCUG 64013 / CIP 107961 / Muc)</name>
    <dbReference type="NCBI Taxonomy" id="349741"/>
    <lineage>
        <taxon>Bacteria</taxon>
        <taxon>Pseudomonadati</taxon>
        <taxon>Verrucomicrobiota</taxon>
        <taxon>Verrucomicrobiia</taxon>
        <taxon>Verrucomicrobiales</taxon>
        <taxon>Akkermansiaceae</taxon>
        <taxon>Akkermansia</taxon>
    </lineage>
</organism>